<feature type="chain" id="PRO_0000135816" description="Histidinol dehydrogenase">
    <location>
        <begin position="1"/>
        <end position="428"/>
    </location>
</feature>
<feature type="active site" description="Proton acceptor" evidence="1">
    <location>
        <position position="325"/>
    </location>
</feature>
<feature type="active site" description="Proton acceptor" evidence="1">
    <location>
        <position position="326"/>
    </location>
</feature>
<feature type="binding site" evidence="1">
    <location>
        <position position="127"/>
    </location>
    <ligand>
        <name>NAD(+)</name>
        <dbReference type="ChEBI" id="CHEBI:57540"/>
    </ligand>
</feature>
<feature type="binding site" evidence="1">
    <location>
        <position position="189"/>
    </location>
    <ligand>
        <name>NAD(+)</name>
        <dbReference type="ChEBI" id="CHEBI:57540"/>
    </ligand>
</feature>
<feature type="binding site" evidence="1">
    <location>
        <position position="212"/>
    </location>
    <ligand>
        <name>NAD(+)</name>
        <dbReference type="ChEBI" id="CHEBI:57540"/>
    </ligand>
</feature>
<feature type="binding site" evidence="1">
    <location>
        <position position="235"/>
    </location>
    <ligand>
        <name>substrate</name>
    </ligand>
</feature>
<feature type="binding site" evidence="1">
    <location>
        <position position="257"/>
    </location>
    <ligand>
        <name>substrate</name>
    </ligand>
</feature>
<feature type="binding site" evidence="1">
    <location>
        <position position="257"/>
    </location>
    <ligand>
        <name>Zn(2+)</name>
        <dbReference type="ChEBI" id="CHEBI:29105"/>
    </ligand>
</feature>
<feature type="binding site" evidence="1">
    <location>
        <position position="260"/>
    </location>
    <ligand>
        <name>substrate</name>
    </ligand>
</feature>
<feature type="binding site" evidence="1">
    <location>
        <position position="260"/>
    </location>
    <ligand>
        <name>Zn(2+)</name>
        <dbReference type="ChEBI" id="CHEBI:29105"/>
    </ligand>
</feature>
<feature type="binding site" evidence="1">
    <location>
        <position position="326"/>
    </location>
    <ligand>
        <name>substrate</name>
    </ligand>
</feature>
<feature type="binding site" evidence="1">
    <location>
        <position position="359"/>
    </location>
    <ligand>
        <name>substrate</name>
    </ligand>
</feature>
<feature type="binding site" evidence="1">
    <location>
        <position position="359"/>
    </location>
    <ligand>
        <name>Zn(2+)</name>
        <dbReference type="ChEBI" id="CHEBI:29105"/>
    </ligand>
</feature>
<feature type="binding site" evidence="1">
    <location>
        <position position="413"/>
    </location>
    <ligand>
        <name>substrate</name>
    </ligand>
</feature>
<feature type="binding site" evidence="1">
    <location>
        <position position="418"/>
    </location>
    <ligand>
        <name>substrate</name>
    </ligand>
</feature>
<feature type="binding site" evidence="1">
    <location>
        <position position="418"/>
    </location>
    <ligand>
        <name>Zn(2+)</name>
        <dbReference type="ChEBI" id="CHEBI:29105"/>
    </ligand>
</feature>
<gene>
    <name evidence="1" type="primary">hisD</name>
    <name type="ordered locus">PMM1488</name>
</gene>
<proteinExistence type="inferred from homology"/>
<name>HISX_PROMP</name>
<accession>Q7V004</accession>
<reference key="1">
    <citation type="journal article" date="2003" name="Nature">
        <title>Genome divergence in two Prochlorococcus ecotypes reflects oceanic niche differentiation.</title>
        <authorList>
            <person name="Rocap G."/>
            <person name="Larimer F.W."/>
            <person name="Lamerdin J.E."/>
            <person name="Malfatti S."/>
            <person name="Chain P."/>
            <person name="Ahlgren N.A."/>
            <person name="Arellano A."/>
            <person name="Coleman M."/>
            <person name="Hauser L."/>
            <person name="Hess W.R."/>
            <person name="Johnson Z.I."/>
            <person name="Land M.L."/>
            <person name="Lindell D."/>
            <person name="Post A.F."/>
            <person name="Regala W."/>
            <person name="Shah M."/>
            <person name="Shaw S.L."/>
            <person name="Steglich C."/>
            <person name="Sullivan M.B."/>
            <person name="Ting C.S."/>
            <person name="Tolonen A."/>
            <person name="Webb E.A."/>
            <person name="Zinser E.R."/>
            <person name="Chisholm S.W."/>
        </authorList>
    </citation>
    <scope>NUCLEOTIDE SEQUENCE [LARGE SCALE GENOMIC DNA]</scope>
    <source>
        <strain>CCMP1986 / NIES-2087 / MED4</strain>
    </source>
</reference>
<evidence type="ECO:0000255" key="1">
    <source>
        <dbReference type="HAMAP-Rule" id="MF_01024"/>
    </source>
</evidence>
<sequence>MKIINSKQKALQELRRISQRTTSGDNKKINSIVENILQEVKFHGDIAVEKYTKKFDGFYPKPMQVSTRDLKTAWEETDQHLKKSLEVAYQRIKKFHEKEIPESFTIKGEFGDSVQRRWMPVKNAGLYIPGGRAAYPSTVLMNAIPAKVAGVKEISMVSPGNEKGKINTTVLAAAYLSGVDKVFRIGGAQAIGALAFGTKQINKVDVISGPGNIYVTTAKKLIYGFTGIDSLAGPSEILIIADRTANSSQIASDLLAQAEHDPLASSILLTTSNDQAQEVFDEVFKIIENHPRKEICIQSIKNWGLIAICENLESCVELSNEFAPEHLEIITIDPKTTLKSIENAGAIFLGKWTPEAVGDYLAGPNHTLPTCGNARFSGSLGVETFMKNSSIIEFNEKSLKINSVDIINLANSEGLHSHANSVKIRFED</sequence>
<dbReference type="EC" id="1.1.1.23" evidence="1"/>
<dbReference type="EMBL" id="BX548174">
    <property type="protein sequence ID" value="CAE19947.1"/>
    <property type="molecule type" value="Genomic_DNA"/>
</dbReference>
<dbReference type="RefSeq" id="WP_011133116.1">
    <property type="nucleotide sequence ID" value="NC_005072.1"/>
</dbReference>
<dbReference type="SMR" id="Q7V004"/>
<dbReference type="STRING" id="59919.PMM1488"/>
<dbReference type="KEGG" id="pmm:PMM1488"/>
<dbReference type="eggNOG" id="COG0141">
    <property type="taxonomic scope" value="Bacteria"/>
</dbReference>
<dbReference type="HOGENOM" id="CLU_006732_3_3_3"/>
<dbReference type="OrthoDB" id="9805269at2"/>
<dbReference type="UniPathway" id="UPA00031">
    <property type="reaction ID" value="UER00014"/>
</dbReference>
<dbReference type="Proteomes" id="UP000001026">
    <property type="component" value="Chromosome"/>
</dbReference>
<dbReference type="GO" id="GO:0005829">
    <property type="term" value="C:cytosol"/>
    <property type="evidence" value="ECO:0007669"/>
    <property type="project" value="TreeGrafter"/>
</dbReference>
<dbReference type="GO" id="GO:0004399">
    <property type="term" value="F:histidinol dehydrogenase activity"/>
    <property type="evidence" value="ECO:0007669"/>
    <property type="project" value="UniProtKB-UniRule"/>
</dbReference>
<dbReference type="GO" id="GO:0051287">
    <property type="term" value="F:NAD binding"/>
    <property type="evidence" value="ECO:0007669"/>
    <property type="project" value="InterPro"/>
</dbReference>
<dbReference type="GO" id="GO:0008270">
    <property type="term" value="F:zinc ion binding"/>
    <property type="evidence" value="ECO:0007669"/>
    <property type="project" value="UniProtKB-UniRule"/>
</dbReference>
<dbReference type="GO" id="GO:0000105">
    <property type="term" value="P:L-histidine biosynthetic process"/>
    <property type="evidence" value="ECO:0007669"/>
    <property type="project" value="UniProtKB-UniRule"/>
</dbReference>
<dbReference type="CDD" id="cd06572">
    <property type="entry name" value="Histidinol_dh"/>
    <property type="match status" value="1"/>
</dbReference>
<dbReference type="FunFam" id="3.40.50.1980:FF:000001">
    <property type="entry name" value="Histidinol dehydrogenase"/>
    <property type="match status" value="1"/>
</dbReference>
<dbReference type="FunFam" id="3.40.50.1980:FF:000026">
    <property type="entry name" value="Histidinol dehydrogenase"/>
    <property type="match status" value="1"/>
</dbReference>
<dbReference type="Gene3D" id="1.20.5.1300">
    <property type="match status" value="1"/>
</dbReference>
<dbReference type="Gene3D" id="3.40.50.1980">
    <property type="entry name" value="Nitrogenase molybdenum iron protein domain"/>
    <property type="match status" value="2"/>
</dbReference>
<dbReference type="HAMAP" id="MF_01024">
    <property type="entry name" value="HisD"/>
    <property type="match status" value="1"/>
</dbReference>
<dbReference type="InterPro" id="IPR016161">
    <property type="entry name" value="Ald_DH/histidinol_DH"/>
</dbReference>
<dbReference type="InterPro" id="IPR001692">
    <property type="entry name" value="Histidinol_DH_CS"/>
</dbReference>
<dbReference type="InterPro" id="IPR022695">
    <property type="entry name" value="Histidinol_DH_monofunct"/>
</dbReference>
<dbReference type="InterPro" id="IPR012131">
    <property type="entry name" value="Hstdl_DH"/>
</dbReference>
<dbReference type="NCBIfam" id="TIGR00069">
    <property type="entry name" value="hisD"/>
    <property type="match status" value="1"/>
</dbReference>
<dbReference type="PANTHER" id="PTHR21256:SF2">
    <property type="entry name" value="HISTIDINE BIOSYNTHESIS TRIFUNCTIONAL PROTEIN"/>
    <property type="match status" value="1"/>
</dbReference>
<dbReference type="PANTHER" id="PTHR21256">
    <property type="entry name" value="HISTIDINOL DEHYDROGENASE HDH"/>
    <property type="match status" value="1"/>
</dbReference>
<dbReference type="Pfam" id="PF00815">
    <property type="entry name" value="Histidinol_dh"/>
    <property type="match status" value="1"/>
</dbReference>
<dbReference type="PIRSF" id="PIRSF000099">
    <property type="entry name" value="Histidinol_dh"/>
    <property type="match status" value="1"/>
</dbReference>
<dbReference type="PRINTS" id="PR00083">
    <property type="entry name" value="HOLDHDRGNASE"/>
</dbReference>
<dbReference type="SUPFAM" id="SSF53720">
    <property type="entry name" value="ALDH-like"/>
    <property type="match status" value="1"/>
</dbReference>
<dbReference type="PROSITE" id="PS00611">
    <property type="entry name" value="HISOL_DEHYDROGENASE"/>
    <property type="match status" value="1"/>
</dbReference>
<protein>
    <recommendedName>
        <fullName evidence="1">Histidinol dehydrogenase</fullName>
        <shortName evidence="1">HDH</shortName>
        <ecNumber evidence="1">1.1.1.23</ecNumber>
    </recommendedName>
</protein>
<comment type="function">
    <text evidence="1">Catalyzes the sequential NAD-dependent oxidations of L-histidinol to L-histidinaldehyde and then to L-histidine.</text>
</comment>
<comment type="catalytic activity">
    <reaction evidence="1">
        <text>L-histidinol + 2 NAD(+) + H2O = L-histidine + 2 NADH + 3 H(+)</text>
        <dbReference type="Rhea" id="RHEA:20641"/>
        <dbReference type="ChEBI" id="CHEBI:15377"/>
        <dbReference type="ChEBI" id="CHEBI:15378"/>
        <dbReference type="ChEBI" id="CHEBI:57540"/>
        <dbReference type="ChEBI" id="CHEBI:57595"/>
        <dbReference type="ChEBI" id="CHEBI:57699"/>
        <dbReference type="ChEBI" id="CHEBI:57945"/>
        <dbReference type="EC" id="1.1.1.23"/>
    </reaction>
</comment>
<comment type="cofactor">
    <cofactor evidence="1">
        <name>Zn(2+)</name>
        <dbReference type="ChEBI" id="CHEBI:29105"/>
    </cofactor>
    <text evidence="1">Binds 1 zinc ion per subunit.</text>
</comment>
<comment type="pathway">
    <text evidence="1">Amino-acid biosynthesis; L-histidine biosynthesis; L-histidine from 5-phospho-alpha-D-ribose 1-diphosphate: step 9/9.</text>
</comment>
<comment type="similarity">
    <text evidence="1">Belongs to the histidinol dehydrogenase family.</text>
</comment>
<keyword id="KW-0028">Amino-acid biosynthesis</keyword>
<keyword id="KW-0368">Histidine biosynthesis</keyword>
<keyword id="KW-0479">Metal-binding</keyword>
<keyword id="KW-0520">NAD</keyword>
<keyword id="KW-0560">Oxidoreductase</keyword>
<keyword id="KW-0862">Zinc</keyword>
<organism>
    <name type="scientific">Prochlorococcus marinus subsp. pastoris (strain CCMP1986 / NIES-2087 / MED4)</name>
    <dbReference type="NCBI Taxonomy" id="59919"/>
    <lineage>
        <taxon>Bacteria</taxon>
        <taxon>Bacillati</taxon>
        <taxon>Cyanobacteriota</taxon>
        <taxon>Cyanophyceae</taxon>
        <taxon>Synechococcales</taxon>
        <taxon>Prochlorococcaceae</taxon>
        <taxon>Prochlorococcus</taxon>
    </lineage>
</organism>